<reference key="1">
    <citation type="journal article" date="2005" name="PLoS Biol.">
        <title>The Wolbachia genome of Brugia malayi: endosymbiont evolution within a human pathogenic nematode.</title>
        <authorList>
            <person name="Foster J."/>
            <person name="Ganatra M."/>
            <person name="Kamal I."/>
            <person name="Ware J."/>
            <person name="Makarova K."/>
            <person name="Ivanova N."/>
            <person name="Bhattacharyya A."/>
            <person name="Kapatral V."/>
            <person name="Kumar S."/>
            <person name="Posfai J."/>
            <person name="Vincze T."/>
            <person name="Ingram J."/>
            <person name="Moran L."/>
            <person name="Lapidus A."/>
            <person name="Omelchenko M."/>
            <person name="Kyrpides N."/>
            <person name="Ghedin E."/>
            <person name="Wang S."/>
            <person name="Goltsman E."/>
            <person name="Joukov V."/>
            <person name="Ostrovskaya O."/>
            <person name="Tsukerman K."/>
            <person name="Mazur M."/>
            <person name="Comb D."/>
            <person name="Koonin E."/>
            <person name="Slatko B."/>
        </authorList>
    </citation>
    <scope>NUCLEOTIDE SEQUENCE [LARGE SCALE GENOMIC DNA]</scope>
    <source>
        <strain>TRS</strain>
    </source>
</reference>
<sequence>MNYYKTHTCNELRKNDVEKEVTLSGWMYRKRDHGNLIFVDLRDFYGITQLVFNNDKDFFCKISDLKPESVITVTGIVKARTEDTINISISTGEIEVTVNNLQIESEVEFHHNEETAKEERSILASIADDQEYPENMRFKYRFLDLRREKVRNNIVLRSQIIAELRKFMIEQGFLEIQTPILTASSPEGARDYLVPSRLNPGKFYALPQAPQIFKQLLMISGFDKYFQIAPCFRDEDARADRSPGEFYQLDLEMSFVTQEDVFQVIESTLYKVFAKFSRKSVDKGFSRITYKEAMLKYGSDKPDLRNPLLISDVTEIFRDSEFNIFKSNIERGMVVRAIPAPKTAEEPRSFFDKKIEHTQKEFGAKGLGYITFNKDGTAKGPIAKFLDDNRLNHIREATNIKPGDSVFFASDKENEAATIAGKVRTLLGSELGLIDNNIFKFCWVVDFPYFVYDDKSKKIDFFHNPFSMPHGGLKDLEEKNPLDILAYQYDLVCNGIELSSGAIRNNKLDIMYKAFATAGYNKEEVNKKFGALVRAFRFGVPPHGGIAPGIDRIVMLLADAPNIREITCFPMNQQGEDVLMDAPSKVDNKHLRELSLKVVE</sequence>
<keyword id="KW-0030">Aminoacyl-tRNA synthetase</keyword>
<keyword id="KW-0067">ATP-binding</keyword>
<keyword id="KW-0963">Cytoplasm</keyword>
<keyword id="KW-0436">Ligase</keyword>
<keyword id="KW-0547">Nucleotide-binding</keyword>
<keyword id="KW-0648">Protein biosynthesis</keyword>
<keyword id="KW-1185">Reference proteome</keyword>
<protein>
    <recommendedName>
        <fullName evidence="1">Aspartate--tRNA(Asp/Asn) ligase</fullName>
        <ecNumber evidence="1">6.1.1.23</ecNumber>
    </recommendedName>
    <alternativeName>
        <fullName evidence="1">Aspartyl-tRNA synthetase</fullName>
        <shortName evidence="1">AspRS</shortName>
    </alternativeName>
    <alternativeName>
        <fullName evidence="1">Non-discriminating aspartyl-tRNA synthetase</fullName>
        <shortName evidence="1">ND-AspRS</shortName>
    </alternativeName>
</protein>
<gene>
    <name evidence="1" type="primary">aspS</name>
    <name type="ordered locus">Wbm0012</name>
</gene>
<feature type="chain" id="PRO_0000235578" description="Aspartate--tRNA(Asp/Asn) ligase">
    <location>
        <begin position="1"/>
        <end position="600"/>
    </location>
</feature>
<feature type="region of interest" description="Aspartate" evidence="1">
    <location>
        <begin position="211"/>
        <end position="214"/>
    </location>
</feature>
<feature type="binding site" evidence="1">
    <location>
        <position position="187"/>
    </location>
    <ligand>
        <name>L-aspartate</name>
        <dbReference type="ChEBI" id="CHEBI:29991"/>
    </ligand>
</feature>
<feature type="binding site" evidence="1">
    <location>
        <begin position="233"/>
        <end position="235"/>
    </location>
    <ligand>
        <name>ATP</name>
        <dbReference type="ChEBI" id="CHEBI:30616"/>
    </ligand>
</feature>
<feature type="binding site" evidence="1">
    <location>
        <position position="233"/>
    </location>
    <ligand>
        <name>L-aspartate</name>
        <dbReference type="ChEBI" id="CHEBI:29991"/>
    </ligand>
</feature>
<feature type="binding site" evidence="1">
    <location>
        <position position="463"/>
    </location>
    <ligand>
        <name>L-aspartate</name>
        <dbReference type="ChEBI" id="CHEBI:29991"/>
    </ligand>
</feature>
<feature type="binding site" evidence="1">
    <location>
        <position position="497"/>
    </location>
    <ligand>
        <name>ATP</name>
        <dbReference type="ChEBI" id="CHEBI:30616"/>
    </ligand>
</feature>
<feature type="binding site" evidence="1">
    <location>
        <position position="504"/>
    </location>
    <ligand>
        <name>L-aspartate</name>
        <dbReference type="ChEBI" id="CHEBI:29991"/>
    </ligand>
</feature>
<feature type="binding site" evidence="1">
    <location>
        <begin position="549"/>
        <end position="552"/>
    </location>
    <ligand>
        <name>ATP</name>
        <dbReference type="ChEBI" id="CHEBI:30616"/>
    </ligand>
</feature>
<feature type="site" description="Important for tRNA non-discrimination" evidence="1">
    <location>
        <position position="33"/>
    </location>
</feature>
<name>SYDND_WOLTR</name>
<proteinExistence type="inferred from homology"/>
<dbReference type="EC" id="6.1.1.23" evidence="1"/>
<dbReference type="EMBL" id="AE017321">
    <property type="protein sequence ID" value="AAW70604.1"/>
    <property type="status" value="ALT_INIT"/>
    <property type="molecule type" value="Genomic_DNA"/>
</dbReference>
<dbReference type="RefSeq" id="WP_041571526.1">
    <property type="nucleotide sequence ID" value="NC_006833.1"/>
</dbReference>
<dbReference type="SMR" id="Q5GTS0"/>
<dbReference type="STRING" id="292805.Wbm0012"/>
<dbReference type="KEGG" id="wbm:Wbm0012"/>
<dbReference type="eggNOG" id="COG0173">
    <property type="taxonomic scope" value="Bacteria"/>
</dbReference>
<dbReference type="HOGENOM" id="CLU_014330_3_2_5"/>
<dbReference type="Proteomes" id="UP000000534">
    <property type="component" value="Chromosome"/>
</dbReference>
<dbReference type="GO" id="GO:0005737">
    <property type="term" value="C:cytoplasm"/>
    <property type="evidence" value="ECO:0007669"/>
    <property type="project" value="UniProtKB-SubCell"/>
</dbReference>
<dbReference type="GO" id="GO:0004815">
    <property type="term" value="F:aspartate-tRNA ligase activity"/>
    <property type="evidence" value="ECO:0007669"/>
    <property type="project" value="UniProtKB-UniRule"/>
</dbReference>
<dbReference type="GO" id="GO:0050560">
    <property type="term" value="F:aspartate-tRNA(Asn) ligase activity"/>
    <property type="evidence" value="ECO:0007669"/>
    <property type="project" value="UniProtKB-EC"/>
</dbReference>
<dbReference type="GO" id="GO:0005524">
    <property type="term" value="F:ATP binding"/>
    <property type="evidence" value="ECO:0007669"/>
    <property type="project" value="UniProtKB-UniRule"/>
</dbReference>
<dbReference type="GO" id="GO:0003676">
    <property type="term" value="F:nucleic acid binding"/>
    <property type="evidence" value="ECO:0007669"/>
    <property type="project" value="InterPro"/>
</dbReference>
<dbReference type="GO" id="GO:0006422">
    <property type="term" value="P:aspartyl-tRNA aminoacylation"/>
    <property type="evidence" value="ECO:0007669"/>
    <property type="project" value="UniProtKB-UniRule"/>
</dbReference>
<dbReference type="CDD" id="cd00777">
    <property type="entry name" value="AspRS_core"/>
    <property type="match status" value="1"/>
</dbReference>
<dbReference type="CDD" id="cd04317">
    <property type="entry name" value="EcAspRS_like_N"/>
    <property type="match status" value="1"/>
</dbReference>
<dbReference type="Gene3D" id="3.30.930.10">
    <property type="entry name" value="Bira Bifunctional Protein, Domain 2"/>
    <property type="match status" value="1"/>
</dbReference>
<dbReference type="Gene3D" id="3.30.1360.30">
    <property type="entry name" value="GAD-like domain"/>
    <property type="match status" value="1"/>
</dbReference>
<dbReference type="Gene3D" id="2.40.50.140">
    <property type="entry name" value="Nucleic acid-binding proteins"/>
    <property type="match status" value="1"/>
</dbReference>
<dbReference type="HAMAP" id="MF_00044">
    <property type="entry name" value="Asp_tRNA_synth_type1"/>
    <property type="match status" value="1"/>
</dbReference>
<dbReference type="InterPro" id="IPR004364">
    <property type="entry name" value="Aa-tRNA-synt_II"/>
</dbReference>
<dbReference type="InterPro" id="IPR006195">
    <property type="entry name" value="aa-tRNA-synth_II"/>
</dbReference>
<dbReference type="InterPro" id="IPR045864">
    <property type="entry name" value="aa-tRNA-synth_II/BPL/LPL"/>
</dbReference>
<dbReference type="InterPro" id="IPR004524">
    <property type="entry name" value="Asp-tRNA-ligase_1"/>
</dbReference>
<dbReference type="InterPro" id="IPR047089">
    <property type="entry name" value="Asp-tRNA-ligase_1_N"/>
</dbReference>
<dbReference type="InterPro" id="IPR002312">
    <property type="entry name" value="Asp/Asn-tRNA-synth_IIb"/>
</dbReference>
<dbReference type="InterPro" id="IPR047090">
    <property type="entry name" value="AspRS_core"/>
</dbReference>
<dbReference type="InterPro" id="IPR004115">
    <property type="entry name" value="GAD-like_sf"/>
</dbReference>
<dbReference type="InterPro" id="IPR029351">
    <property type="entry name" value="GAD_dom"/>
</dbReference>
<dbReference type="InterPro" id="IPR012340">
    <property type="entry name" value="NA-bd_OB-fold"/>
</dbReference>
<dbReference type="InterPro" id="IPR004365">
    <property type="entry name" value="NA-bd_OB_tRNA"/>
</dbReference>
<dbReference type="NCBIfam" id="TIGR00459">
    <property type="entry name" value="aspS_bact"/>
    <property type="match status" value="1"/>
</dbReference>
<dbReference type="NCBIfam" id="NF001750">
    <property type="entry name" value="PRK00476.1"/>
    <property type="match status" value="1"/>
</dbReference>
<dbReference type="PANTHER" id="PTHR22594:SF5">
    <property type="entry name" value="ASPARTATE--TRNA LIGASE, MITOCHONDRIAL"/>
    <property type="match status" value="1"/>
</dbReference>
<dbReference type="PANTHER" id="PTHR22594">
    <property type="entry name" value="ASPARTYL/LYSYL-TRNA SYNTHETASE"/>
    <property type="match status" value="1"/>
</dbReference>
<dbReference type="Pfam" id="PF02938">
    <property type="entry name" value="GAD"/>
    <property type="match status" value="1"/>
</dbReference>
<dbReference type="Pfam" id="PF00152">
    <property type="entry name" value="tRNA-synt_2"/>
    <property type="match status" value="1"/>
</dbReference>
<dbReference type="Pfam" id="PF01336">
    <property type="entry name" value="tRNA_anti-codon"/>
    <property type="match status" value="1"/>
</dbReference>
<dbReference type="PRINTS" id="PR01042">
    <property type="entry name" value="TRNASYNTHASP"/>
</dbReference>
<dbReference type="SUPFAM" id="SSF55681">
    <property type="entry name" value="Class II aaRS and biotin synthetases"/>
    <property type="match status" value="1"/>
</dbReference>
<dbReference type="SUPFAM" id="SSF55261">
    <property type="entry name" value="GAD domain-like"/>
    <property type="match status" value="1"/>
</dbReference>
<dbReference type="SUPFAM" id="SSF50249">
    <property type="entry name" value="Nucleic acid-binding proteins"/>
    <property type="match status" value="1"/>
</dbReference>
<dbReference type="PROSITE" id="PS50862">
    <property type="entry name" value="AA_TRNA_LIGASE_II"/>
    <property type="match status" value="1"/>
</dbReference>
<accession>Q5GTS0</accession>
<comment type="function">
    <text evidence="1">Aspartyl-tRNA synthetase with relaxed tRNA specificity since it is able to aspartylate not only its cognate tRNA(Asp) but also tRNA(Asn). Reaction proceeds in two steps: L-aspartate is first activated by ATP to form Asp-AMP and then transferred to the acceptor end of tRNA(Asp/Asn).</text>
</comment>
<comment type="catalytic activity">
    <reaction evidence="1">
        <text>tRNA(Asx) + L-aspartate + ATP = L-aspartyl-tRNA(Asx) + AMP + diphosphate</text>
        <dbReference type="Rhea" id="RHEA:18349"/>
        <dbReference type="Rhea" id="RHEA-COMP:9710"/>
        <dbReference type="Rhea" id="RHEA-COMP:9711"/>
        <dbReference type="ChEBI" id="CHEBI:29991"/>
        <dbReference type="ChEBI" id="CHEBI:30616"/>
        <dbReference type="ChEBI" id="CHEBI:33019"/>
        <dbReference type="ChEBI" id="CHEBI:78442"/>
        <dbReference type="ChEBI" id="CHEBI:78516"/>
        <dbReference type="ChEBI" id="CHEBI:456215"/>
        <dbReference type="EC" id="6.1.1.23"/>
    </reaction>
</comment>
<comment type="subunit">
    <text evidence="1">Homodimer.</text>
</comment>
<comment type="subcellular location">
    <subcellularLocation>
        <location evidence="1">Cytoplasm</location>
    </subcellularLocation>
</comment>
<comment type="similarity">
    <text evidence="1">Belongs to the class-II aminoacyl-tRNA synthetase family. Type 1 subfamily.</text>
</comment>
<comment type="sequence caution" evidence="2">
    <conflict type="erroneous initiation">
        <sequence resource="EMBL-CDS" id="AAW70604"/>
    </conflict>
</comment>
<organism>
    <name type="scientific">Wolbachia sp. subsp. Brugia malayi (strain TRS)</name>
    <dbReference type="NCBI Taxonomy" id="292805"/>
    <lineage>
        <taxon>Bacteria</taxon>
        <taxon>Pseudomonadati</taxon>
        <taxon>Pseudomonadota</taxon>
        <taxon>Alphaproteobacteria</taxon>
        <taxon>Rickettsiales</taxon>
        <taxon>Anaplasmataceae</taxon>
        <taxon>Wolbachieae</taxon>
        <taxon>Wolbachia</taxon>
    </lineage>
</organism>
<evidence type="ECO:0000255" key="1">
    <source>
        <dbReference type="HAMAP-Rule" id="MF_00044"/>
    </source>
</evidence>
<evidence type="ECO:0000305" key="2"/>